<organism>
    <name type="scientific">Paramagnetospirillum magneticum (strain ATCC 700264 / AMB-1)</name>
    <name type="common">Magnetospirillum magneticum</name>
    <dbReference type="NCBI Taxonomy" id="342108"/>
    <lineage>
        <taxon>Bacteria</taxon>
        <taxon>Pseudomonadati</taxon>
        <taxon>Pseudomonadota</taxon>
        <taxon>Alphaproteobacteria</taxon>
        <taxon>Rhodospirillales</taxon>
        <taxon>Magnetospirillaceae</taxon>
        <taxon>Paramagnetospirillum</taxon>
    </lineage>
</organism>
<sequence>MSFAALEKTIDAAWEARDGINLQTKGEVRDAVEAALDALDSGSLRVAAKGDDGKWVVNQWLKKAVLLSFRLSDNKVMGDGPGTTWFDKVPTKFEGWDDSRFRAAGFRAVPGAVVRRSAYIAPGVVLMPSFVNLGAHVGSGTMVDTWATVGSCAQIGKNVHISGGAGIGGVLEPLQAGPVIIEDNCFIGARAEVAEGVIVETGAVLSMGVYIGASTKIVDRETGEIFMGRVPAYSVVVSGTMPGKPFPDGTPGPGLYCAVIVKRVDERTRSKVGINELLRD</sequence>
<keyword id="KW-0012">Acyltransferase</keyword>
<keyword id="KW-0028">Amino-acid biosynthesis</keyword>
<keyword id="KW-0963">Cytoplasm</keyword>
<keyword id="KW-0220">Diaminopimelate biosynthesis</keyword>
<keyword id="KW-0457">Lysine biosynthesis</keyword>
<keyword id="KW-0677">Repeat</keyword>
<keyword id="KW-0808">Transferase</keyword>
<comment type="catalytic activity">
    <reaction evidence="1">
        <text>(S)-2,3,4,5-tetrahydrodipicolinate + succinyl-CoA + H2O = (S)-2-succinylamino-6-oxoheptanedioate + CoA</text>
        <dbReference type="Rhea" id="RHEA:17325"/>
        <dbReference type="ChEBI" id="CHEBI:15377"/>
        <dbReference type="ChEBI" id="CHEBI:15685"/>
        <dbReference type="ChEBI" id="CHEBI:16845"/>
        <dbReference type="ChEBI" id="CHEBI:57287"/>
        <dbReference type="ChEBI" id="CHEBI:57292"/>
        <dbReference type="EC" id="2.3.1.117"/>
    </reaction>
</comment>
<comment type="pathway">
    <text evidence="1">Amino-acid biosynthesis; L-lysine biosynthesis via DAP pathway; LL-2,6-diaminopimelate from (S)-tetrahydrodipicolinate (succinylase route): step 1/3.</text>
</comment>
<comment type="subunit">
    <text evidence="1">Homotrimer.</text>
</comment>
<comment type="subcellular location">
    <subcellularLocation>
        <location evidence="1">Cytoplasm</location>
    </subcellularLocation>
</comment>
<comment type="similarity">
    <text evidence="1">Belongs to the transferase hexapeptide repeat family.</text>
</comment>
<feature type="chain" id="PRO_1000047149" description="2,3,4,5-tetrahydropyridine-2,6-dicarboxylate N-succinyltransferase">
    <location>
        <begin position="1"/>
        <end position="280"/>
    </location>
</feature>
<feature type="binding site" evidence="1">
    <location>
        <position position="107"/>
    </location>
    <ligand>
        <name>substrate</name>
    </ligand>
</feature>
<feature type="binding site" evidence="1">
    <location>
        <position position="144"/>
    </location>
    <ligand>
        <name>substrate</name>
    </ligand>
</feature>
<proteinExistence type="inferred from homology"/>
<protein>
    <recommendedName>
        <fullName evidence="1">2,3,4,5-tetrahydropyridine-2,6-dicarboxylate N-succinyltransferase</fullName>
        <ecNumber evidence="1">2.3.1.117</ecNumber>
    </recommendedName>
    <alternativeName>
        <fullName evidence="1">Tetrahydrodipicolinate N-succinyltransferase</fullName>
        <shortName evidence="1">THDP succinyltransferase</shortName>
        <shortName evidence="1">THP succinyltransferase</shortName>
        <shortName evidence="1">Tetrahydropicolinate succinylase</shortName>
    </alternativeName>
</protein>
<name>DAPD_PARM1</name>
<dbReference type="EC" id="2.3.1.117" evidence="1"/>
<dbReference type="EMBL" id="AP007255">
    <property type="protein sequence ID" value="BAE52677.1"/>
    <property type="molecule type" value="Genomic_DNA"/>
</dbReference>
<dbReference type="RefSeq" id="WP_011386227.1">
    <property type="nucleotide sequence ID" value="NC_007626.1"/>
</dbReference>
<dbReference type="SMR" id="Q2W0E8"/>
<dbReference type="STRING" id="342108.amb3873"/>
<dbReference type="KEGG" id="mag:amb3873"/>
<dbReference type="HOGENOM" id="CLU_050859_0_1_5"/>
<dbReference type="OrthoDB" id="9775362at2"/>
<dbReference type="UniPathway" id="UPA00034">
    <property type="reaction ID" value="UER00019"/>
</dbReference>
<dbReference type="Proteomes" id="UP000007058">
    <property type="component" value="Chromosome"/>
</dbReference>
<dbReference type="GO" id="GO:0005737">
    <property type="term" value="C:cytoplasm"/>
    <property type="evidence" value="ECO:0007669"/>
    <property type="project" value="UniProtKB-SubCell"/>
</dbReference>
<dbReference type="GO" id="GO:0008666">
    <property type="term" value="F:2,3,4,5-tetrahydropyridine-2,6-dicarboxylate N-succinyltransferase activity"/>
    <property type="evidence" value="ECO:0007669"/>
    <property type="project" value="UniProtKB-UniRule"/>
</dbReference>
<dbReference type="GO" id="GO:0019877">
    <property type="term" value="P:diaminopimelate biosynthetic process"/>
    <property type="evidence" value="ECO:0007669"/>
    <property type="project" value="UniProtKB-UniRule"/>
</dbReference>
<dbReference type="GO" id="GO:0009089">
    <property type="term" value="P:lysine biosynthetic process via diaminopimelate"/>
    <property type="evidence" value="ECO:0007669"/>
    <property type="project" value="UniProtKB-UniRule"/>
</dbReference>
<dbReference type="CDD" id="cd03350">
    <property type="entry name" value="LbH_THP_succinylT"/>
    <property type="match status" value="1"/>
</dbReference>
<dbReference type="Gene3D" id="2.160.10.10">
    <property type="entry name" value="Hexapeptide repeat proteins"/>
    <property type="match status" value="1"/>
</dbReference>
<dbReference type="Gene3D" id="1.10.166.10">
    <property type="entry name" value="Tetrahydrodipicolinate-N-succinyltransferase, N-terminal domain"/>
    <property type="match status" value="1"/>
</dbReference>
<dbReference type="HAMAP" id="MF_00811">
    <property type="entry name" value="DapD"/>
    <property type="match status" value="1"/>
</dbReference>
<dbReference type="InterPro" id="IPR005664">
    <property type="entry name" value="DapD_Trfase_Hexpep_rpt_fam"/>
</dbReference>
<dbReference type="InterPro" id="IPR001451">
    <property type="entry name" value="Hexapep"/>
</dbReference>
<dbReference type="InterPro" id="IPR023180">
    <property type="entry name" value="THP_succinylTrfase_dom1"/>
</dbReference>
<dbReference type="InterPro" id="IPR037133">
    <property type="entry name" value="THP_succinylTrfase_N_sf"/>
</dbReference>
<dbReference type="InterPro" id="IPR050179">
    <property type="entry name" value="Trans_hexapeptide_repeat"/>
</dbReference>
<dbReference type="InterPro" id="IPR011004">
    <property type="entry name" value="Trimer_LpxA-like_sf"/>
</dbReference>
<dbReference type="NCBIfam" id="TIGR00965">
    <property type="entry name" value="dapD"/>
    <property type="match status" value="1"/>
</dbReference>
<dbReference type="NCBIfam" id="NF008808">
    <property type="entry name" value="PRK11830.1"/>
    <property type="match status" value="1"/>
</dbReference>
<dbReference type="PANTHER" id="PTHR43300:SF10">
    <property type="entry name" value="2,3,4,5-TETRAHYDROPYRIDINE-2,6-DICARBOXYLATE N-ACETYLTRANSFERASE"/>
    <property type="match status" value="1"/>
</dbReference>
<dbReference type="PANTHER" id="PTHR43300">
    <property type="entry name" value="ACETYLTRANSFERASE"/>
    <property type="match status" value="1"/>
</dbReference>
<dbReference type="Pfam" id="PF14602">
    <property type="entry name" value="Hexapep_2"/>
    <property type="match status" value="1"/>
</dbReference>
<dbReference type="Pfam" id="PF14805">
    <property type="entry name" value="THDPS_N_2"/>
    <property type="match status" value="1"/>
</dbReference>
<dbReference type="SUPFAM" id="SSF51161">
    <property type="entry name" value="Trimeric LpxA-like enzymes"/>
    <property type="match status" value="1"/>
</dbReference>
<reference key="1">
    <citation type="journal article" date="2005" name="DNA Res.">
        <title>Complete genome sequence of the facultative anaerobic magnetotactic bacterium Magnetospirillum sp. strain AMB-1.</title>
        <authorList>
            <person name="Matsunaga T."/>
            <person name="Okamura Y."/>
            <person name="Fukuda Y."/>
            <person name="Wahyudi A.T."/>
            <person name="Murase Y."/>
            <person name="Takeyama H."/>
        </authorList>
    </citation>
    <scope>NUCLEOTIDE SEQUENCE [LARGE SCALE GENOMIC DNA]</scope>
    <source>
        <strain>ATCC 700264 / AMB-1</strain>
    </source>
</reference>
<accession>Q2W0E8</accession>
<gene>
    <name evidence="1" type="primary">dapD</name>
    <name type="ordered locus">amb3873</name>
</gene>
<evidence type="ECO:0000255" key="1">
    <source>
        <dbReference type="HAMAP-Rule" id="MF_00811"/>
    </source>
</evidence>